<dbReference type="EC" id="7.6.2.14" evidence="1"/>
<dbReference type="EMBL" id="CP000090">
    <property type="protein sequence ID" value="AAZ61338.1"/>
    <property type="molecule type" value="Genomic_DNA"/>
</dbReference>
<dbReference type="SMR" id="Q46ZU5"/>
<dbReference type="STRING" id="264198.Reut_A1974"/>
<dbReference type="KEGG" id="reu:Reut_A1974"/>
<dbReference type="eggNOG" id="COG1116">
    <property type="taxonomic scope" value="Bacteria"/>
</dbReference>
<dbReference type="HOGENOM" id="CLU_000604_1_22_4"/>
<dbReference type="OrthoDB" id="9783039at2"/>
<dbReference type="GO" id="GO:0005886">
    <property type="term" value="C:plasma membrane"/>
    <property type="evidence" value="ECO:0007669"/>
    <property type="project" value="UniProtKB-SubCell"/>
</dbReference>
<dbReference type="GO" id="GO:0005524">
    <property type="term" value="F:ATP binding"/>
    <property type="evidence" value="ECO:0007669"/>
    <property type="project" value="UniProtKB-KW"/>
</dbReference>
<dbReference type="GO" id="GO:0016887">
    <property type="term" value="F:ATP hydrolysis activity"/>
    <property type="evidence" value="ECO:0007669"/>
    <property type="project" value="InterPro"/>
</dbReference>
<dbReference type="CDD" id="cd03293">
    <property type="entry name" value="ABC_NrtD_SsuB_transporters"/>
    <property type="match status" value="1"/>
</dbReference>
<dbReference type="Gene3D" id="3.40.50.300">
    <property type="entry name" value="P-loop containing nucleotide triphosphate hydrolases"/>
    <property type="match status" value="1"/>
</dbReference>
<dbReference type="InterPro" id="IPR003593">
    <property type="entry name" value="AAA+_ATPase"/>
</dbReference>
<dbReference type="InterPro" id="IPR003439">
    <property type="entry name" value="ABC_transporter-like_ATP-bd"/>
</dbReference>
<dbReference type="InterPro" id="IPR017871">
    <property type="entry name" value="ABC_transporter-like_CS"/>
</dbReference>
<dbReference type="InterPro" id="IPR050166">
    <property type="entry name" value="ABC_transporter_ATP-bind"/>
</dbReference>
<dbReference type="InterPro" id="IPR027417">
    <property type="entry name" value="P-loop_NTPase"/>
</dbReference>
<dbReference type="PANTHER" id="PTHR42788:SF17">
    <property type="entry name" value="ALIPHATIC SULFONATES IMPORT ATP-BINDING PROTEIN SSUB"/>
    <property type="match status" value="1"/>
</dbReference>
<dbReference type="PANTHER" id="PTHR42788">
    <property type="entry name" value="TAURINE IMPORT ATP-BINDING PROTEIN-RELATED"/>
    <property type="match status" value="1"/>
</dbReference>
<dbReference type="Pfam" id="PF00005">
    <property type="entry name" value="ABC_tran"/>
    <property type="match status" value="1"/>
</dbReference>
<dbReference type="SMART" id="SM00382">
    <property type="entry name" value="AAA"/>
    <property type="match status" value="1"/>
</dbReference>
<dbReference type="SUPFAM" id="SSF52540">
    <property type="entry name" value="P-loop containing nucleoside triphosphate hydrolases"/>
    <property type="match status" value="1"/>
</dbReference>
<dbReference type="PROSITE" id="PS00211">
    <property type="entry name" value="ABC_TRANSPORTER_1"/>
    <property type="match status" value="1"/>
</dbReference>
<dbReference type="PROSITE" id="PS50893">
    <property type="entry name" value="ABC_TRANSPORTER_2"/>
    <property type="match status" value="1"/>
</dbReference>
<dbReference type="PROSITE" id="PS51291">
    <property type="entry name" value="SSUB"/>
    <property type="match status" value="1"/>
</dbReference>
<keyword id="KW-0067">ATP-binding</keyword>
<keyword id="KW-0997">Cell inner membrane</keyword>
<keyword id="KW-1003">Cell membrane</keyword>
<keyword id="KW-0472">Membrane</keyword>
<keyword id="KW-0547">Nucleotide-binding</keyword>
<keyword id="KW-1278">Translocase</keyword>
<keyword id="KW-0813">Transport</keyword>
<evidence type="ECO:0000255" key="1">
    <source>
        <dbReference type="HAMAP-Rule" id="MF_01724"/>
    </source>
</evidence>
<gene>
    <name evidence="1" type="primary">ssuB</name>
    <name type="ordered locus">Reut_A1974</name>
</gene>
<proteinExistence type="inferred from homology"/>
<accession>Q46ZU5</accession>
<name>SSUB_CUPPJ</name>
<comment type="function">
    <text evidence="1">Part of the ABC transporter complex SsuABC involved in aliphatic sulfonates import. Responsible for energy coupling to the transport system.</text>
</comment>
<comment type="catalytic activity">
    <reaction evidence="1">
        <text>ATP + H2O + aliphatic sulfonate-[sulfonate-binding protein]Side 1 = ADP + phosphate + aliphatic sulfonateSide 2 + [sulfonate-binding protein]Side 1.</text>
        <dbReference type="EC" id="7.6.2.14"/>
    </reaction>
</comment>
<comment type="subunit">
    <text evidence="1">The complex is composed of two ATP-binding proteins (SsuB), two transmembrane proteins (SsuC) and a solute-binding protein (SsuA).</text>
</comment>
<comment type="subcellular location">
    <subcellularLocation>
        <location evidence="1">Cell inner membrane</location>
        <topology evidence="1">Peripheral membrane protein</topology>
    </subcellularLocation>
</comment>
<comment type="similarity">
    <text evidence="1">Belongs to the ABC transporter superfamily. Aliphatic sulfonates importer (TC 3.A.1.17.2) family.</text>
</comment>
<feature type="chain" id="PRO_0000279947" description="Aliphatic sulfonates import ATP-binding protein SsuB">
    <location>
        <begin position="1"/>
        <end position="299"/>
    </location>
</feature>
<feature type="domain" description="ABC transporter" evidence="1">
    <location>
        <begin position="36"/>
        <end position="257"/>
    </location>
</feature>
<feature type="binding site" evidence="1">
    <location>
        <begin position="68"/>
        <end position="75"/>
    </location>
    <ligand>
        <name>ATP</name>
        <dbReference type="ChEBI" id="CHEBI:30616"/>
    </ligand>
</feature>
<organism>
    <name type="scientific">Cupriavidus pinatubonensis (strain JMP 134 / LMG 1197)</name>
    <name type="common">Cupriavidus necator (strain JMP 134)</name>
    <dbReference type="NCBI Taxonomy" id="264198"/>
    <lineage>
        <taxon>Bacteria</taxon>
        <taxon>Pseudomonadati</taxon>
        <taxon>Pseudomonadota</taxon>
        <taxon>Betaproteobacteria</taxon>
        <taxon>Burkholderiales</taxon>
        <taxon>Burkholderiaceae</taxon>
        <taxon>Cupriavidus</taxon>
    </lineage>
</organism>
<sequence length="299" mass="32884">MQSNPVEQAALAYAGTRLKQTDAPLSAETQPGGVALHVQQVIKRYDGREVLHRIELTAAPGEFVAIVGRSGCGKSTLLRLVAGLECADEGAITLDAQPARTLQQDIRVMFQDSRLLPWKRVLENVALGLPRERREEAAAVLAQVGLRDRADAWPARLSGGQRQRVALARSLVHHPRLLLLDEPLGALDALTRIEMQGLIESLWRRLGFTALLVTHDVSEAVALADRIVLIEDGHIAMDERVALPRPRQHGSAAFAQIEERVLRRVMQHTPDAEGVSQSEQEATADWSLVRTVESVRFAV</sequence>
<protein>
    <recommendedName>
        <fullName evidence="1">Aliphatic sulfonates import ATP-binding protein SsuB</fullName>
        <ecNumber evidence="1">7.6.2.14</ecNumber>
    </recommendedName>
</protein>
<reference key="1">
    <citation type="journal article" date="2010" name="PLoS ONE">
        <title>The complete multipartite genome sequence of Cupriavidus necator JMP134, a versatile pollutant degrader.</title>
        <authorList>
            <person name="Lykidis A."/>
            <person name="Perez-Pantoja D."/>
            <person name="Ledger T."/>
            <person name="Mavromatis K."/>
            <person name="Anderson I.J."/>
            <person name="Ivanova N.N."/>
            <person name="Hooper S.D."/>
            <person name="Lapidus A."/>
            <person name="Lucas S."/>
            <person name="Gonzalez B."/>
            <person name="Kyrpides N.C."/>
        </authorList>
    </citation>
    <scope>NUCLEOTIDE SEQUENCE [LARGE SCALE GENOMIC DNA]</scope>
    <source>
        <strain>JMP134 / LMG 1197</strain>
    </source>
</reference>